<evidence type="ECO:0000250" key="1"/>
<evidence type="ECO:0000255" key="2"/>
<evidence type="ECO:0000256" key="3">
    <source>
        <dbReference type="SAM" id="MobiDB-lite"/>
    </source>
</evidence>
<evidence type="ECO:0000305" key="4"/>
<evidence type="ECO:0007744" key="5">
    <source>
    </source>
</evidence>
<evidence type="ECO:0007744" key="6">
    <source>
    </source>
</evidence>
<organism>
    <name type="scientific">Arabidopsis thaliana</name>
    <name type="common">Mouse-ear cress</name>
    <dbReference type="NCBI Taxonomy" id="3702"/>
    <lineage>
        <taxon>Eukaryota</taxon>
        <taxon>Viridiplantae</taxon>
        <taxon>Streptophyta</taxon>
        <taxon>Embryophyta</taxon>
        <taxon>Tracheophyta</taxon>
        <taxon>Spermatophyta</taxon>
        <taxon>Magnoliopsida</taxon>
        <taxon>eudicotyledons</taxon>
        <taxon>Gunneridae</taxon>
        <taxon>Pentapetalae</taxon>
        <taxon>rosids</taxon>
        <taxon>malvids</taxon>
        <taxon>Brassicales</taxon>
        <taxon>Brassicaceae</taxon>
        <taxon>Camelineae</taxon>
        <taxon>Arabidopsis</taxon>
    </lineage>
</organism>
<accession>Q9LIB3</accession>
<protein>
    <recommendedName>
        <fullName>BAG family molecular chaperone regulator 8, chloroplastic</fullName>
    </recommendedName>
    <alternativeName>
        <fullName>Bcl-2-associated athanogene 8</fullName>
    </alternativeName>
</protein>
<proteinExistence type="evidence at protein level"/>
<feature type="transit peptide" description="Chloroplast" evidence="2">
    <location>
        <begin position="1"/>
        <end position="52"/>
    </location>
</feature>
<feature type="chain" id="PRO_0000415528" description="BAG family molecular chaperone regulator 8, chloroplastic">
    <location>
        <begin position="53"/>
        <end position="551"/>
    </location>
</feature>
<feature type="domain" description="IQ">
    <location>
        <begin position="131"/>
        <end position="160"/>
    </location>
</feature>
<feature type="domain" description="BAG">
    <location>
        <begin position="147"/>
        <end position="228"/>
    </location>
</feature>
<feature type="region of interest" description="Disordered" evidence="3">
    <location>
        <begin position="1"/>
        <end position="46"/>
    </location>
</feature>
<feature type="region of interest" description="Disordered" evidence="3">
    <location>
        <begin position="246"/>
        <end position="281"/>
    </location>
</feature>
<feature type="region of interest" description="Disordered" evidence="3">
    <location>
        <begin position="414"/>
        <end position="433"/>
    </location>
</feature>
<feature type="region of interest" description="Disordered" evidence="3">
    <location>
        <begin position="450"/>
        <end position="551"/>
    </location>
</feature>
<feature type="compositionally biased region" description="Basic residues" evidence="3">
    <location>
        <begin position="1"/>
        <end position="19"/>
    </location>
</feature>
<feature type="compositionally biased region" description="Polar residues" evidence="3">
    <location>
        <begin position="20"/>
        <end position="38"/>
    </location>
</feature>
<feature type="compositionally biased region" description="Acidic residues" evidence="3">
    <location>
        <begin position="256"/>
        <end position="271"/>
    </location>
</feature>
<feature type="compositionally biased region" description="Basic and acidic residues" evidence="3">
    <location>
        <begin position="479"/>
        <end position="499"/>
    </location>
</feature>
<feature type="compositionally biased region" description="Acidic residues" evidence="3">
    <location>
        <begin position="500"/>
        <end position="513"/>
    </location>
</feature>
<feature type="compositionally biased region" description="Basic and acidic residues" evidence="3">
    <location>
        <begin position="522"/>
        <end position="534"/>
    </location>
</feature>
<feature type="modified residue" description="Phosphoserine" evidence="5 6">
    <location>
        <position position="332"/>
    </location>
</feature>
<gene>
    <name type="primary">BAG1</name>
    <name type="ordered locus">At3g29310</name>
    <name type="ORF">MUO10.1</name>
</gene>
<reference key="1">
    <citation type="journal article" date="2000" name="DNA Res.">
        <title>Structural analysis of Arabidopsis thaliana chromosome 3. II. Sequence features of the 4,251,695 bp regions covered by 90 P1, TAC and BAC clones.</title>
        <authorList>
            <person name="Kaneko T."/>
            <person name="Katoh T."/>
            <person name="Sato S."/>
            <person name="Nakamura Y."/>
            <person name="Asamizu E."/>
            <person name="Tabata S."/>
        </authorList>
    </citation>
    <scope>NUCLEOTIDE SEQUENCE [LARGE SCALE GENOMIC DNA]</scope>
    <source>
        <strain>cv. Columbia</strain>
    </source>
</reference>
<reference key="2">
    <citation type="journal article" date="2017" name="Plant J.">
        <title>Araport11: a complete reannotation of the Arabidopsis thaliana reference genome.</title>
        <authorList>
            <person name="Cheng C.Y."/>
            <person name="Krishnakumar V."/>
            <person name="Chan A.P."/>
            <person name="Thibaud-Nissen F."/>
            <person name="Schobel S."/>
            <person name="Town C.D."/>
        </authorList>
    </citation>
    <scope>GENOME REANNOTATION</scope>
    <source>
        <strain>cv. Columbia</strain>
    </source>
</reference>
<reference key="3">
    <citation type="journal article" date="2003" name="Science">
        <title>Empirical analysis of transcriptional activity in the Arabidopsis genome.</title>
        <authorList>
            <person name="Yamada K."/>
            <person name="Lim J."/>
            <person name="Dale J.M."/>
            <person name="Chen H."/>
            <person name="Shinn P."/>
            <person name="Palm C.J."/>
            <person name="Southwick A.M."/>
            <person name="Wu H.C."/>
            <person name="Kim C.J."/>
            <person name="Nguyen M."/>
            <person name="Pham P.K."/>
            <person name="Cheuk R.F."/>
            <person name="Karlin-Newmann G."/>
            <person name="Liu S.X."/>
            <person name="Lam B."/>
            <person name="Sakano H."/>
            <person name="Wu T."/>
            <person name="Yu G."/>
            <person name="Miranda M."/>
            <person name="Quach H.L."/>
            <person name="Tripp M."/>
            <person name="Chang C.H."/>
            <person name="Lee J.M."/>
            <person name="Toriumi M.J."/>
            <person name="Chan M.M."/>
            <person name="Tang C.C."/>
            <person name="Onodera C.S."/>
            <person name="Deng J.M."/>
            <person name="Akiyama K."/>
            <person name="Ansari Y."/>
            <person name="Arakawa T."/>
            <person name="Banh J."/>
            <person name="Banno F."/>
            <person name="Bowser L."/>
            <person name="Brooks S.Y."/>
            <person name="Carninci P."/>
            <person name="Chao Q."/>
            <person name="Choy N."/>
            <person name="Enju A."/>
            <person name="Goldsmith A.D."/>
            <person name="Gurjal M."/>
            <person name="Hansen N.F."/>
            <person name="Hayashizaki Y."/>
            <person name="Johnson-Hopson C."/>
            <person name="Hsuan V.W."/>
            <person name="Iida K."/>
            <person name="Karnes M."/>
            <person name="Khan S."/>
            <person name="Koesema E."/>
            <person name="Ishida J."/>
            <person name="Jiang P.X."/>
            <person name="Jones T."/>
            <person name="Kawai J."/>
            <person name="Kamiya A."/>
            <person name="Meyers C."/>
            <person name="Nakajima M."/>
            <person name="Narusaka M."/>
            <person name="Seki M."/>
            <person name="Sakurai T."/>
            <person name="Satou M."/>
            <person name="Tamse R."/>
            <person name="Vaysberg M."/>
            <person name="Wallender E.K."/>
            <person name="Wong C."/>
            <person name="Yamamura Y."/>
            <person name="Yuan S."/>
            <person name="Shinozaki K."/>
            <person name="Davis R.W."/>
            <person name="Theologis A."/>
            <person name="Ecker J.R."/>
        </authorList>
    </citation>
    <scope>NUCLEOTIDE SEQUENCE [LARGE SCALE MRNA]</scope>
    <source>
        <strain>cv. Columbia</strain>
    </source>
</reference>
<reference key="4">
    <citation type="journal article" date="2003" name="Mol. Cell. Proteomics">
        <title>Large-scale analysis of in vivo phosphorylated membrane proteins by immobilized metal ion affinity chromatography and mass spectrometry.</title>
        <authorList>
            <person name="Nuehse T.S."/>
            <person name="Stensballe A."/>
            <person name="Jensen O.N."/>
            <person name="Peck S.C."/>
        </authorList>
    </citation>
    <scope>PHOSPHORYLATION [LARGE SCALE ANALYSIS] AT SER-332</scope>
    <scope>IDENTIFICATION BY MASS SPECTROMETRY [LARGE SCALE ANALYSIS]</scope>
    <source>
        <strain>cv. La-0</strain>
    </source>
</reference>
<reference key="5">
    <citation type="journal article" date="2003" name="Plant Sci.">
        <title>The BAG-family proteins in Arabidopsis thaliana.</title>
        <authorList>
            <person name="Juqiang Y."/>
            <person name="Cixin H."/>
            <person name="Hong Z."/>
        </authorList>
    </citation>
    <scope>GENE FAMILY</scope>
    <scope>NOMENCLATURE</scope>
</reference>
<reference key="6">
    <citation type="journal article" date="2004" name="Plant Cell">
        <title>Phosphoproteomics of the Arabidopsis plasma membrane and a new phosphorylation site database.</title>
        <authorList>
            <person name="Nuehse T.S."/>
            <person name="Stensballe A."/>
            <person name="Jensen O.N."/>
            <person name="Peck S.C."/>
        </authorList>
    </citation>
    <scope>PHOSPHORYLATION [LARGE SCALE ANALYSIS] AT SER-332</scope>
    <scope>IDENTIFICATION BY MASS SPECTROMETRY [LARGE SCALE ANALYSIS]</scope>
</reference>
<comment type="function">
    <text evidence="1">Co-chaperone that regulates diverse cellular pathways, such as programmed cell death and stress responses.</text>
</comment>
<comment type="subunit">
    <text evidence="1">Binds to the ATPase domain of HSP70/HSC70 chaperones.</text>
</comment>
<comment type="subcellular location">
    <subcellularLocation>
        <location evidence="4">Plastid</location>
        <location evidence="4">Chloroplast</location>
    </subcellularLocation>
</comment>
<comment type="domain">
    <text evidence="1">IQ domain mediates interaction with calmodulin.</text>
</comment>
<name>BAG8_ARATH</name>
<keyword id="KW-0112">Calmodulin-binding</keyword>
<keyword id="KW-0143">Chaperone</keyword>
<keyword id="KW-0150">Chloroplast</keyword>
<keyword id="KW-0597">Phosphoprotein</keyword>
<keyword id="KW-0934">Plastid</keyword>
<keyword id="KW-1185">Reference proteome</keyword>
<keyword id="KW-0809">Transit peptide</keyword>
<sequence length="551" mass="61496">MASHHHHNHNHVCSRHQNHHNNTPQFATSPNCCNKSNHPSPPPAEDNLLHLVATYLQNHQQETQCSCETSCQNFNVIRSQNRVLRQHKNVPREYDQVVLSCLLRKIDDLESSLNKFSSFYDKRRDRHSTLRDSAARVIQTHFRSYLVHRSISFRQLKELAMIKASFLSLKSSVSGKLIFPFKVVSRKATDLLLQLDSIQGRIDPMIRSSKRSLSRDLVRFVQYVDDCVVKRYGFVVKSGSGIKLNGKKPQGFGTSSEDEDNNADMSDDSEEVPVSSIDKRKVASSKSRTGVVIEGDVVKPPVMKFVVLDKNRNVCQVYGNRHDLTSSAEDDSVDGDEETLVMSRDNGRKQSLKARNGVSVKGGGGKTTRVVKTVSFDENGNVCKVYGDTHDLTSSAEDDDSVDVGEETLVMCRDEGKRRSSKTGSRVLVKGSGGKTNRVVKTVSFDENGNVYKAYGDTPESSIISEEDDSTSGSNEGNGEEKGNVNEVEEIKYVPKENESFEEEEEKETDSENEVSSSEGSEGDKRVTKKEVQHQKGSLMFSPPLPLKMEP</sequence>
<dbReference type="EMBL" id="AP001309">
    <property type="protein sequence ID" value="BAB02575.1"/>
    <property type="molecule type" value="Genomic_DNA"/>
</dbReference>
<dbReference type="EMBL" id="AP002045">
    <property type="protein sequence ID" value="BAB02575.1"/>
    <property type="status" value="JOINED"/>
    <property type="molecule type" value="Genomic_DNA"/>
</dbReference>
<dbReference type="EMBL" id="CP002686">
    <property type="protein sequence ID" value="AEE77566.1"/>
    <property type="molecule type" value="Genomic_DNA"/>
</dbReference>
<dbReference type="EMBL" id="AY078969">
    <property type="protein sequence ID" value="AAL84966.1"/>
    <property type="molecule type" value="mRNA"/>
</dbReference>
<dbReference type="EMBL" id="AY149937">
    <property type="protein sequence ID" value="AAN31091.1"/>
    <property type="molecule type" value="mRNA"/>
</dbReference>
<dbReference type="RefSeq" id="NP_189577.2">
    <property type="nucleotide sequence ID" value="NM_113856.4"/>
</dbReference>
<dbReference type="SMR" id="Q9LIB3"/>
<dbReference type="BioGRID" id="7918">
    <property type="interactions" value="1"/>
</dbReference>
<dbReference type="FunCoup" id="Q9LIB3">
    <property type="interactions" value="1143"/>
</dbReference>
<dbReference type="IntAct" id="Q9LIB3">
    <property type="interactions" value="1"/>
</dbReference>
<dbReference type="STRING" id="3702.Q9LIB3"/>
<dbReference type="iPTMnet" id="Q9LIB3"/>
<dbReference type="PaxDb" id="3702-AT3G29310.1"/>
<dbReference type="ProteomicsDB" id="240713"/>
<dbReference type="EnsemblPlants" id="AT3G29310.1">
    <property type="protein sequence ID" value="AT3G29310.1"/>
    <property type="gene ID" value="AT3G29310"/>
</dbReference>
<dbReference type="GeneID" id="822589"/>
<dbReference type="Gramene" id="AT3G29310.1">
    <property type="protein sequence ID" value="AT3G29310.1"/>
    <property type="gene ID" value="AT3G29310"/>
</dbReference>
<dbReference type="KEGG" id="ath:AT3G29310"/>
<dbReference type="Araport" id="AT3G29310"/>
<dbReference type="TAIR" id="AT3G29310"/>
<dbReference type="eggNOG" id="ENOG502QVMA">
    <property type="taxonomic scope" value="Eukaryota"/>
</dbReference>
<dbReference type="HOGENOM" id="CLU_036545_0_0_1"/>
<dbReference type="InParanoid" id="Q9LIB3"/>
<dbReference type="OMA" id="DCVVKRY"/>
<dbReference type="PhylomeDB" id="Q9LIB3"/>
<dbReference type="PRO" id="PR:Q9LIB3"/>
<dbReference type="Proteomes" id="UP000006548">
    <property type="component" value="Chromosome 3"/>
</dbReference>
<dbReference type="ExpressionAtlas" id="Q9LIB3">
    <property type="expression patterns" value="baseline and differential"/>
</dbReference>
<dbReference type="GO" id="GO:0009507">
    <property type="term" value="C:chloroplast"/>
    <property type="evidence" value="ECO:0007669"/>
    <property type="project" value="UniProtKB-SubCell"/>
</dbReference>
<dbReference type="GO" id="GO:0005886">
    <property type="term" value="C:plasma membrane"/>
    <property type="evidence" value="ECO:0007005"/>
    <property type="project" value="TAIR"/>
</dbReference>
<dbReference type="GO" id="GO:0005516">
    <property type="term" value="F:calmodulin binding"/>
    <property type="evidence" value="ECO:0007669"/>
    <property type="project" value="UniProtKB-KW"/>
</dbReference>
<dbReference type="InterPro" id="IPR040400">
    <property type="entry name" value="BAG5/6/7/8"/>
</dbReference>
<dbReference type="PANTHER" id="PTHR33322">
    <property type="entry name" value="BAG DOMAIN CONTAINING PROTEIN, EXPRESSED"/>
    <property type="match status" value="1"/>
</dbReference>
<dbReference type="PANTHER" id="PTHR33322:SF18">
    <property type="entry name" value="BAG FAMILY MOLECULAR CHAPERONE REGULATOR 8, CHLOROPLASTIC"/>
    <property type="match status" value="1"/>
</dbReference>